<keyword id="KW-0238">DNA-binding</keyword>
<keyword id="KW-0479">Metal-binding</keyword>
<keyword id="KW-0539">Nucleus</keyword>
<keyword id="KW-1185">Reference proteome</keyword>
<keyword id="KW-0677">Repeat</keyword>
<keyword id="KW-0862">Zinc</keyword>
<keyword id="KW-0863">Zinc-finger</keyword>
<protein>
    <recommendedName>
        <fullName>Zinc finger CCCH domain-containing protein 43</fullName>
        <shortName>AtC3H43</shortName>
    </recommendedName>
    <alternativeName>
        <fullName>Zinc finger CCCH domain-containing protein ZFN-like 6</fullName>
    </alternativeName>
</protein>
<evidence type="ECO:0000250" key="1"/>
<evidence type="ECO:0000255" key="2">
    <source>
        <dbReference type="PROSITE-ProRule" id="PRU00723"/>
    </source>
</evidence>
<evidence type="ECO:0000256" key="3">
    <source>
        <dbReference type="SAM" id="MobiDB-lite"/>
    </source>
</evidence>
<feature type="chain" id="PRO_0000213920" description="Zinc finger CCCH domain-containing protein 43">
    <location>
        <begin position="1"/>
        <end position="448"/>
    </location>
</feature>
<feature type="zinc finger region" description="C3H1-type 1" evidence="2">
    <location>
        <begin position="110"/>
        <end position="138"/>
    </location>
</feature>
<feature type="zinc finger region" description="C3H1-type 2" evidence="2">
    <location>
        <begin position="158"/>
        <end position="186"/>
    </location>
</feature>
<feature type="zinc finger region" description="C3H1-type 3" evidence="2">
    <location>
        <begin position="204"/>
        <end position="232"/>
    </location>
</feature>
<feature type="zinc finger region" description="C3H1-type 4" evidence="2">
    <location>
        <begin position="346"/>
        <end position="374"/>
    </location>
</feature>
<feature type="zinc finger region" description="C3H1-type 5" evidence="2">
    <location>
        <begin position="392"/>
        <end position="420"/>
    </location>
</feature>
<feature type="region of interest" description="Disordered" evidence="3">
    <location>
        <begin position="1"/>
        <end position="106"/>
    </location>
</feature>
<feature type="region of interest" description="Disordered" evidence="3">
    <location>
        <begin position="424"/>
        <end position="448"/>
    </location>
</feature>
<feature type="compositionally biased region" description="Basic and acidic residues" evidence="3">
    <location>
        <begin position="24"/>
        <end position="45"/>
    </location>
</feature>
<feature type="compositionally biased region" description="Polar residues" evidence="3">
    <location>
        <begin position="63"/>
        <end position="79"/>
    </location>
</feature>
<feature type="compositionally biased region" description="Acidic residues" evidence="3">
    <location>
        <begin position="80"/>
        <end position="89"/>
    </location>
</feature>
<feature type="compositionally biased region" description="Polar residues" evidence="3">
    <location>
        <begin position="437"/>
        <end position="448"/>
    </location>
</feature>
<accession>Q9STM4</accession>
<accession>B4F7Q6</accession>
<name>C3H43_ARATH</name>
<comment type="subcellular location">
    <subcellularLocation>
        <location evidence="1">Nucleus</location>
    </subcellularLocation>
</comment>
<dbReference type="EMBL" id="AL049659">
    <property type="protein sequence ID" value="CAB41154.1"/>
    <property type="molecule type" value="Genomic_DNA"/>
</dbReference>
<dbReference type="EMBL" id="CP002686">
    <property type="protein sequence ID" value="AEE78417.1"/>
    <property type="molecule type" value="Genomic_DNA"/>
</dbReference>
<dbReference type="EMBL" id="BT033139">
    <property type="protein sequence ID" value="ACF37203.1"/>
    <property type="molecule type" value="mRNA"/>
</dbReference>
<dbReference type="PIR" id="T06698">
    <property type="entry name" value="T06698"/>
</dbReference>
<dbReference type="RefSeq" id="NP_190414.1">
    <property type="nucleotide sequence ID" value="NM_114703.2"/>
</dbReference>
<dbReference type="FunCoup" id="Q9STM4">
    <property type="interactions" value="194"/>
</dbReference>
<dbReference type="STRING" id="3702.Q9STM4"/>
<dbReference type="GlyGen" id="Q9STM4">
    <property type="glycosylation" value="3 sites, 1 O-linked glycan (3 sites)"/>
</dbReference>
<dbReference type="iPTMnet" id="Q9STM4"/>
<dbReference type="PaxDb" id="3702-AT3G48440.1"/>
<dbReference type="ProteomicsDB" id="240263"/>
<dbReference type="EnsemblPlants" id="AT3G48440.1">
    <property type="protein sequence ID" value="AT3G48440.1"/>
    <property type="gene ID" value="AT3G48440"/>
</dbReference>
<dbReference type="GeneID" id="824003"/>
<dbReference type="Gramene" id="AT3G48440.1">
    <property type="protein sequence ID" value="AT3G48440.1"/>
    <property type="gene ID" value="AT3G48440"/>
</dbReference>
<dbReference type="KEGG" id="ath:AT3G48440"/>
<dbReference type="Araport" id="AT3G48440"/>
<dbReference type="TAIR" id="AT3G48440"/>
<dbReference type="eggNOG" id="KOG1677">
    <property type="taxonomic scope" value="Eukaryota"/>
</dbReference>
<dbReference type="HOGENOM" id="CLU_033292_3_1_1"/>
<dbReference type="InParanoid" id="Q9STM4"/>
<dbReference type="OMA" id="TTMYPSE"/>
<dbReference type="PhylomeDB" id="Q9STM4"/>
<dbReference type="PRO" id="PR:Q9STM4"/>
<dbReference type="Proteomes" id="UP000006548">
    <property type="component" value="Chromosome 3"/>
</dbReference>
<dbReference type="ExpressionAtlas" id="Q9STM4">
    <property type="expression patterns" value="baseline and differential"/>
</dbReference>
<dbReference type="GO" id="GO:0005634">
    <property type="term" value="C:nucleus"/>
    <property type="evidence" value="ECO:0007669"/>
    <property type="project" value="UniProtKB-SubCell"/>
</dbReference>
<dbReference type="GO" id="GO:0003677">
    <property type="term" value="F:DNA binding"/>
    <property type="evidence" value="ECO:0007669"/>
    <property type="project" value="UniProtKB-KW"/>
</dbReference>
<dbReference type="GO" id="GO:0003729">
    <property type="term" value="F:mRNA binding"/>
    <property type="evidence" value="ECO:0000314"/>
    <property type="project" value="TAIR"/>
</dbReference>
<dbReference type="GO" id="GO:0008270">
    <property type="term" value="F:zinc ion binding"/>
    <property type="evidence" value="ECO:0007669"/>
    <property type="project" value="UniProtKB-KW"/>
</dbReference>
<dbReference type="Gene3D" id="2.30.30.1190">
    <property type="match status" value="1"/>
</dbReference>
<dbReference type="Gene3D" id="4.10.1000.10">
    <property type="entry name" value="Zinc finger, CCCH-type"/>
    <property type="match status" value="3"/>
</dbReference>
<dbReference type="InterPro" id="IPR050974">
    <property type="entry name" value="Plant_ZF_CCCH"/>
</dbReference>
<dbReference type="InterPro" id="IPR000571">
    <property type="entry name" value="Znf_CCCH"/>
</dbReference>
<dbReference type="InterPro" id="IPR036855">
    <property type="entry name" value="Znf_CCCH_sf"/>
</dbReference>
<dbReference type="PANTHER" id="PTHR12506">
    <property type="entry name" value="PROTEIN PHOSPHATASE RELATED"/>
    <property type="match status" value="1"/>
</dbReference>
<dbReference type="PANTHER" id="PTHR12506:SF49">
    <property type="entry name" value="ZINC FINGER CCCH DOMAIN-CONTAINING PROTEIN 43"/>
    <property type="match status" value="1"/>
</dbReference>
<dbReference type="Pfam" id="PF00642">
    <property type="entry name" value="zf-CCCH"/>
    <property type="match status" value="5"/>
</dbReference>
<dbReference type="SMART" id="SM00356">
    <property type="entry name" value="ZnF_C3H1"/>
    <property type="match status" value="5"/>
</dbReference>
<dbReference type="SUPFAM" id="SSF90229">
    <property type="entry name" value="CCCH zinc finger"/>
    <property type="match status" value="5"/>
</dbReference>
<dbReference type="PROSITE" id="PS50103">
    <property type="entry name" value="ZF_C3H1"/>
    <property type="match status" value="5"/>
</dbReference>
<sequence length="448" mass="49864">MVNSEEIADGFEPKPVSRSYSGDSSHDRSLSDLNHAAEDLSDKLKNVGLNEVTKEQSEKMMSVSESNGGLDSNAVVTINQEEEEEEEDRDGYGYGDGWSENESENVYPVRPGAEDCSFYMRTGSCKFGSSCKFNHPLARKFQIARDNKVREKEDDGGKLGLIDCKYYFRTGGCKYGETCRFNHTIPKSGLASAPELNFLGLPLRPGEVECPYYMRNGSCKYGAECKFNHPDPTTIGGTDSPSFRGNNGVSIGTFSPKATFQASSTSWSSPRHVNGTSPFIPVMLSQTHGVTSQNPEWNGYQASVYSSERGVFSPSTTYLMNNSSAETSMLLSQYRHQMPAEEFPERPDQPECSYYMKTGDCKFKFNCKYHHPKNRLPKLPPYALNDKGLPLRPDQNICTYYSRYGICKFGPACRFDHSVQPPYSTESSQAIVEPPQVSANGNESDGWN</sequence>
<proteinExistence type="evidence at transcript level"/>
<reference key="1">
    <citation type="journal article" date="2000" name="Nature">
        <title>Sequence and analysis of chromosome 3 of the plant Arabidopsis thaliana.</title>
        <authorList>
            <person name="Salanoubat M."/>
            <person name="Lemcke K."/>
            <person name="Rieger M."/>
            <person name="Ansorge W."/>
            <person name="Unseld M."/>
            <person name="Fartmann B."/>
            <person name="Valle G."/>
            <person name="Bloecker H."/>
            <person name="Perez-Alonso M."/>
            <person name="Obermaier B."/>
            <person name="Delseny M."/>
            <person name="Boutry M."/>
            <person name="Grivell L.A."/>
            <person name="Mache R."/>
            <person name="Puigdomenech P."/>
            <person name="De Simone V."/>
            <person name="Choisne N."/>
            <person name="Artiguenave F."/>
            <person name="Robert C."/>
            <person name="Brottier P."/>
            <person name="Wincker P."/>
            <person name="Cattolico L."/>
            <person name="Weissenbach J."/>
            <person name="Saurin W."/>
            <person name="Quetier F."/>
            <person name="Schaefer M."/>
            <person name="Mueller-Auer S."/>
            <person name="Gabel C."/>
            <person name="Fuchs M."/>
            <person name="Benes V."/>
            <person name="Wurmbach E."/>
            <person name="Drzonek H."/>
            <person name="Erfle H."/>
            <person name="Jordan N."/>
            <person name="Bangert S."/>
            <person name="Wiedelmann R."/>
            <person name="Kranz H."/>
            <person name="Voss H."/>
            <person name="Holland R."/>
            <person name="Brandt P."/>
            <person name="Nyakatura G."/>
            <person name="Vezzi A."/>
            <person name="D'Angelo M."/>
            <person name="Pallavicini A."/>
            <person name="Toppo S."/>
            <person name="Simionati B."/>
            <person name="Conrad A."/>
            <person name="Hornischer K."/>
            <person name="Kauer G."/>
            <person name="Loehnert T.-H."/>
            <person name="Nordsiek G."/>
            <person name="Reichelt J."/>
            <person name="Scharfe M."/>
            <person name="Schoen O."/>
            <person name="Bargues M."/>
            <person name="Terol J."/>
            <person name="Climent J."/>
            <person name="Navarro P."/>
            <person name="Collado C."/>
            <person name="Perez-Perez A."/>
            <person name="Ottenwaelder B."/>
            <person name="Duchemin D."/>
            <person name="Cooke R."/>
            <person name="Laudie M."/>
            <person name="Berger-Llauro C."/>
            <person name="Purnelle B."/>
            <person name="Masuy D."/>
            <person name="de Haan M."/>
            <person name="Maarse A.C."/>
            <person name="Alcaraz J.-P."/>
            <person name="Cottet A."/>
            <person name="Casacuberta E."/>
            <person name="Monfort A."/>
            <person name="Argiriou A."/>
            <person name="Flores M."/>
            <person name="Liguori R."/>
            <person name="Vitale D."/>
            <person name="Mannhaupt G."/>
            <person name="Haase D."/>
            <person name="Schoof H."/>
            <person name="Rudd S."/>
            <person name="Zaccaria P."/>
            <person name="Mewes H.-W."/>
            <person name="Mayer K.F.X."/>
            <person name="Kaul S."/>
            <person name="Town C.D."/>
            <person name="Koo H.L."/>
            <person name="Tallon L.J."/>
            <person name="Jenkins J."/>
            <person name="Rooney T."/>
            <person name="Rizzo M."/>
            <person name="Walts A."/>
            <person name="Utterback T."/>
            <person name="Fujii C.Y."/>
            <person name="Shea T.P."/>
            <person name="Creasy T.H."/>
            <person name="Haas B."/>
            <person name="Maiti R."/>
            <person name="Wu D."/>
            <person name="Peterson J."/>
            <person name="Van Aken S."/>
            <person name="Pai G."/>
            <person name="Militscher J."/>
            <person name="Sellers P."/>
            <person name="Gill J.E."/>
            <person name="Feldblyum T.V."/>
            <person name="Preuss D."/>
            <person name="Lin X."/>
            <person name="Nierman W.C."/>
            <person name="Salzberg S.L."/>
            <person name="White O."/>
            <person name="Venter J.C."/>
            <person name="Fraser C.M."/>
            <person name="Kaneko T."/>
            <person name="Nakamura Y."/>
            <person name="Sato S."/>
            <person name="Kato T."/>
            <person name="Asamizu E."/>
            <person name="Sasamoto S."/>
            <person name="Kimura T."/>
            <person name="Idesawa K."/>
            <person name="Kawashima K."/>
            <person name="Kishida Y."/>
            <person name="Kiyokawa C."/>
            <person name="Kohara M."/>
            <person name="Matsumoto M."/>
            <person name="Matsuno A."/>
            <person name="Muraki A."/>
            <person name="Nakayama S."/>
            <person name="Nakazaki N."/>
            <person name="Shinpo S."/>
            <person name="Takeuchi C."/>
            <person name="Wada T."/>
            <person name="Watanabe A."/>
            <person name="Yamada M."/>
            <person name="Yasuda M."/>
            <person name="Tabata S."/>
        </authorList>
    </citation>
    <scope>NUCLEOTIDE SEQUENCE [LARGE SCALE GENOMIC DNA]</scope>
    <source>
        <strain>cv. Columbia</strain>
    </source>
</reference>
<reference key="2">
    <citation type="journal article" date="2017" name="Plant J.">
        <title>Araport11: a complete reannotation of the Arabidopsis thaliana reference genome.</title>
        <authorList>
            <person name="Cheng C.Y."/>
            <person name="Krishnakumar V."/>
            <person name="Chan A.P."/>
            <person name="Thibaud-Nissen F."/>
            <person name="Schobel S."/>
            <person name="Town C.D."/>
        </authorList>
    </citation>
    <scope>GENOME REANNOTATION</scope>
    <source>
        <strain>cv. Columbia</strain>
    </source>
</reference>
<reference key="3">
    <citation type="submission" date="2008-07" db="EMBL/GenBank/DDBJ databases">
        <title>Arabidopsis ORF clones.</title>
        <authorList>
            <person name="De Los Reyes C."/>
            <person name="Quan R."/>
            <person name="Chen H."/>
            <person name="Bautista V.R."/>
            <person name="Kim C.J."/>
            <person name="Ecker J.R."/>
        </authorList>
    </citation>
    <scope>NUCLEOTIDE SEQUENCE [LARGE SCALE MRNA]</scope>
    <source>
        <strain>cv. Columbia</strain>
    </source>
</reference>
<reference key="4">
    <citation type="journal article" date="2008" name="BMC Genomics">
        <title>Genome-wide analysis of CCCH zinc finger family in Arabidopsis and rice.</title>
        <authorList>
            <person name="Wang D."/>
            <person name="Guo Y."/>
            <person name="Wu C."/>
            <person name="Yang G."/>
            <person name="Li Y."/>
            <person name="Zheng C."/>
        </authorList>
    </citation>
    <scope>NOMENCLATURE</scope>
</reference>
<organism>
    <name type="scientific">Arabidopsis thaliana</name>
    <name type="common">Mouse-ear cress</name>
    <dbReference type="NCBI Taxonomy" id="3702"/>
    <lineage>
        <taxon>Eukaryota</taxon>
        <taxon>Viridiplantae</taxon>
        <taxon>Streptophyta</taxon>
        <taxon>Embryophyta</taxon>
        <taxon>Tracheophyta</taxon>
        <taxon>Spermatophyta</taxon>
        <taxon>Magnoliopsida</taxon>
        <taxon>eudicotyledons</taxon>
        <taxon>Gunneridae</taxon>
        <taxon>Pentapetalae</taxon>
        <taxon>rosids</taxon>
        <taxon>malvids</taxon>
        <taxon>Brassicales</taxon>
        <taxon>Brassicaceae</taxon>
        <taxon>Camelineae</taxon>
        <taxon>Arabidopsis</taxon>
    </lineage>
</organism>
<gene>
    <name type="ordered locus">At3g48440</name>
    <name type="ORF">T29H11.40</name>
</gene>